<evidence type="ECO:0000255" key="1">
    <source>
        <dbReference type="HAMAP-Rule" id="MF_00480"/>
    </source>
</evidence>
<evidence type="ECO:0000305" key="2"/>
<organism>
    <name type="scientific">Chloroflexus aggregans (strain MD-66 / DSM 9485)</name>
    <dbReference type="NCBI Taxonomy" id="326427"/>
    <lineage>
        <taxon>Bacteria</taxon>
        <taxon>Bacillati</taxon>
        <taxon>Chloroflexota</taxon>
        <taxon>Chloroflexia</taxon>
        <taxon>Chloroflexales</taxon>
        <taxon>Chloroflexineae</taxon>
        <taxon>Chloroflexaceae</taxon>
        <taxon>Chloroflexus</taxon>
    </lineage>
</organism>
<accession>B8G6T0</accession>
<keyword id="KW-0687">Ribonucleoprotein</keyword>
<keyword id="KW-0689">Ribosomal protein</keyword>
<keyword id="KW-0694">RNA-binding</keyword>
<keyword id="KW-0699">rRNA-binding</keyword>
<keyword id="KW-0820">tRNA-binding</keyword>
<name>RS7_CHLAD</name>
<protein>
    <recommendedName>
        <fullName evidence="1">Small ribosomal subunit protein uS7</fullName>
    </recommendedName>
    <alternativeName>
        <fullName evidence="2">30S ribosomal protein S7</fullName>
    </alternativeName>
</protein>
<sequence length="157" mass="17990">MPRRGVVERRPIPPDARYNSVLVQKFINKVMERGKKSLAERIVYQALDLAAEKLKKPQLEIFEQALRNASPSIEVKPKRVGGATYQVPVEVKSDRRYSLAMRWLIMSARARTGKPMVERLAAELIDAYNNTGTTIKRKEDVHRMAEANRAFAHYGRL</sequence>
<dbReference type="EMBL" id="CP001337">
    <property type="protein sequence ID" value="ACL25889.1"/>
    <property type="molecule type" value="Genomic_DNA"/>
</dbReference>
<dbReference type="RefSeq" id="WP_015941741.1">
    <property type="nucleotide sequence ID" value="NC_011831.1"/>
</dbReference>
<dbReference type="SMR" id="B8G6T0"/>
<dbReference type="STRING" id="326427.Cagg_3029"/>
<dbReference type="KEGG" id="cag:Cagg_3029"/>
<dbReference type="eggNOG" id="COG0049">
    <property type="taxonomic scope" value="Bacteria"/>
</dbReference>
<dbReference type="HOGENOM" id="CLU_072226_1_1_0"/>
<dbReference type="OrthoDB" id="9807653at2"/>
<dbReference type="Proteomes" id="UP000002508">
    <property type="component" value="Chromosome"/>
</dbReference>
<dbReference type="GO" id="GO:0015935">
    <property type="term" value="C:small ribosomal subunit"/>
    <property type="evidence" value="ECO:0007669"/>
    <property type="project" value="InterPro"/>
</dbReference>
<dbReference type="GO" id="GO:0019843">
    <property type="term" value="F:rRNA binding"/>
    <property type="evidence" value="ECO:0007669"/>
    <property type="project" value="UniProtKB-UniRule"/>
</dbReference>
<dbReference type="GO" id="GO:0003735">
    <property type="term" value="F:structural constituent of ribosome"/>
    <property type="evidence" value="ECO:0007669"/>
    <property type="project" value="InterPro"/>
</dbReference>
<dbReference type="GO" id="GO:0000049">
    <property type="term" value="F:tRNA binding"/>
    <property type="evidence" value="ECO:0007669"/>
    <property type="project" value="UniProtKB-UniRule"/>
</dbReference>
<dbReference type="GO" id="GO:0006412">
    <property type="term" value="P:translation"/>
    <property type="evidence" value="ECO:0007669"/>
    <property type="project" value="UniProtKB-UniRule"/>
</dbReference>
<dbReference type="CDD" id="cd14869">
    <property type="entry name" value="uS7_Bacteria"/>
    <property type="match status" value="1"/>
</dbReference>
<dbReference type="FunFam" id="1.10.455.10:FF:000001">
    <property type="entry name" value="30S ribosomal protein S7"/>
    <property type="match status" value="1"/>
</dbReference>
<dbReference type="Gene3D" id="1.10.455.10">
    <property type="entry name" value="Ribosomal protein S7 domain"/>
    <property type="match status" value="1"/>
</dbReference>
<dbReference type="HAMAP" id="MF_00480_B">
    <property type="entry name" value="Ribosomal_uS7_B"/>
    <property type="match status" value="1"/>
</dbReference>
<dbReference type="InterPro" id="IPR000235">
    <property type="entry name" value="Ribosomal_uS7"/>
</dbReference>
<dbReference type="InterPro" id="IPR005717">
    <property type="entry name" value="Ribosomal_uS7_bac/org-type"/>
</dbReference>
<dbReference type="InterPro" id="IPR020606">
    <property type="entry name" value="Ribosomal_uS7_CS"/>
</dbReference>
<dbReference type="InterPro" id="IPR023798">
    <property type="entry name" value="Ribosomal_uS7_dom"/>
</dbReference>
<dbReference type="InterPro" id="IPR036823">
    <property type="entry name" value="Ribosomal_uS7_dom_sf"/>
</dbReference>
<dbReference type="NCBIfam" id="TIGR01029">
    <property type="entry name" value="rpsG_bact"/>
    <property type="match status" value="1"/>
</dbReference>
<dbReference type="PANTHER" id="PTHR11205">
    <property type="entry name" value="RIBOSOMAL PROTEIN S7"/>
    <property type="match status" value="1"/>
</dbReference>
<dbReference type="Pfam" id="PF00177">
    <property type="entry name" value="Ribosomal_S7"/>
    <property type="match status" value="1"/>
</dbReference>
<dbReference type="PIRSF" id="PIRSF002122">
    <property type="entry name" value="RPS7p_RPS7a_RPS5e_RPS7o"/>
    <property type="match status" value="1"/>
</dbReference>
<dbReference type="SUPFAM" id="SSF47973">
    <property type="entry name" value="Ribosomal protein S7"/>
    <property type="match status" value="1"/>
</dbReference>
<dbReference type="PROSITE" id="PS00052">
    <property type="entry name" value="RIBOSOMAL_S7"/>
    <property type="match status" value="1"/>
</dbReference>
<gene>
    <name evidence="1" type="primary">rpsG</name>
    <name type="ordered locus">Cagg_3029</name>
</gene>
<reference key="1">
    <citation type="submission" date="2008-12" db="EMBL/GenBank/DDBJ databases">
        <title>Complete sequence of Chloroflexus aggregans DSM 9485.</title>
        <authorList>
            <consortium name="US DOE Joint Genome Institute"/>
            <person name="Lucas S."/>
            <person name="Copeland A."/>
            <person name="Lapidus A."/>
            <person name="Glavina del Rio T."/>
            <person name="Dalin E."/>
            <person name="Tice H."/>
            <person name="Pitluck S."/>
            <person name="Foster B."/>
            <person name="Larimer F."/>
            <person name="Land M."/>
            <person name="Hauser L."/>
            <person name="Kyrpides N."/>
            <person name="Mikhailova N."/>
            <person name="Bryant D.A."/>
            <person name="Richardson P."/>
        </authorList>
    </citation>
    <scope>NUCLEOTIDE SEQUENCE [LARGE SCALE GENOMIC DNA]</scope>
    <source>
        <strain>MD-66 / DSM 9485</strain>
    </source>
</reference>
<comment type="function">
    <text evidence="1">One of the primary rRNA binding proteins, it binds directly to 16S rRNA where it nucleates assembly of the head domain of the 30S subunit. Is located at the subunit interface close to the decoding center, probably blocks exit of the E-site tRNA.</text>
</comment>
<comment type="subunit">
    <text evidence="1">Part of the 30S ribosomal subunit. Contacts proteins S9 and S11.</text>
</comment>
<comment type="similarity">
    <text evidence="1">Belongs to the universal ribosomal protein uS7 family.</text>
</comment>
<feature type="chain" id="PRO_1000135590" description="Small ribosomal subunit protein uS7">
    <location>
        <begin position="1"/>
        <end position="157"/>
    </location>
</feature>
<proteinExistence type="inferred from homology"/>